<feature type="signal peptide" evidence="1">
    <location>
        <begin position="1"/>
        <end position="32"/>
    </location>
</feature>
<feature type="chain" id="PRO_0000195900" description="Equistatin" evidence="5">
    <location>
        <begin position="33"/>
        <end position="231"/>
    </location>
</feature>
<feature type="domain" description="Thyroglobulin type-1 1" evidence="2">
    <location>
        <begin position="34"/>
        <end position="95"/>
    </location>
</feature>
<feature type="domain" description="Thyroglobulin type-1 2" evidence="2">
    <location>
        <begin position="102"/>
        <end position="163"/>
    </location>
</feature>
<feature type="domain" description="Thyroglobulin type-1 3" evidence="2">
    <location>
        <begin position="167"/>
        <end position="231"/>
    </location>
</feature>
<feature type="disulfide bond" evidence="2">
    <location>
        <begin position="37"/>
        <end position="56"/>
    </location>
</feature>
<feature type="disulfide bond" evidence="2">
    <location>
        <begin position="67"/>
        <end position="74"/>
    </location>
</feature>
<feature type="disulfide bond" evidence="2">
    <location>
        <begin position="76"/>
        <end position="95"/>
    </location>
</feature>
<feature type="disulfide bond" evidence="2">
    <location>
        <begin position="105"/>
        <end position="124"/>
    </location>
</feature>
<feature type="disulfide bond" evidence="2">
    <location>
        <begin position="135"/>
        <end position="142"/>
    </location>
</feature>
<feature type="disulfide bond" evidence="2">
    <location>
        <begin position="144"/>
        <end position="163"/>
    </location>
</feature>
<feature type="disulfide bond" evidence="2">
    <location>
        <begin position="170"/>
        <end position="191"/>
    </location>
</feature>
<feature type="disulfide bond" evidence="2">
    <location>
        <begin position="202"/>
        <end position="209"/>
    </location>
</feature>
<feature type="disulfide bond" evidence="2">
    <location>
        <begin position="211"/>
        <end position="231"/>
    </location>
</feature>
<feature type="sequence variant">
    <original>T</original>
    <variation>S</variation>
    <location>
        <position position="35"/>
    </location>
</feature>
<feature type="sequence variant">
    <original>C</original>
    <variation>V</variation>
    <location>
        <position position="74"/>
    </location>
</feature>
<feature type="sequence variant">
    <original>T</original>
    <variation>S</variation>
    <location>
        <position position="162"/>
    </location>
</feature>
<feature type="sequence variant">
    <original>E</original>
    <variation>P</variation>
    <location>
        <position position="169"/>
    </location>
</feature>
<feature type="sequence variant">
    <original>IK</original>
    <variation>LQ</variation>
    <location>
        <begin position="175"/>
        <end position="176"/>
    </location>
</feature>
<feature type="sequence variant">
    <original>V</original>
    <variation>L</variation>
    <location>
        <position position="188"/>
    </location>
</feature>
<feature type="sequence variant">
    <original>G</original>
    <variation>D</variation>
    <location>
        <position position="216"/>
    </location>
</feature>
<feature type="sequence conflict" description="In Ref. 2; AAF02722." evidence="8" ref="2">
    <original>A</original>
    <variation>T</variation>
    <location>
        <position position="51"/>
    </location>
</feature>
<feature type="sequence conflict" description="In Ref. 3; AA sequence." evidence="8" ref="3">
    <original>Q</original>
    <variation>K</variation>
    <location>
        <position position="158"/>
    </location>
</feature>
<feature type="sequence conflict" description="In Ref. 3; AA sequence." evidence="8" ref="3">
    <original>E</original>
    <variation>G</variation>
    <location>
        <position position="185"/>
    </location>
</feature>
<feature type="sequence conflict" description="In Ref. 3; AA sequence." evidence="8" ref="3">
    <original>E</original>
    <variation>Q</variation>
    <location>
        <position position="190"/>
    </location>
</feature>
<feature type="sequence conflict" description="In Ref. 2; AAF02722 and 3; AA sequence." evidence="8" ref="2 3">
    <original>F</original>
    <variation>L</variation>
    <location>
        <position position="192"/>
    </location>
</feature>
<reference evidence="10" key="1">
    <citation type="journal article" date="2000" name="Biochem. Biophys. Res. Commun.">
        <title>Equistatin, a protease inhibitor from the sea anemone actinia equina, is composed of three structural and functional domains.</title>
        <authorList>
            <person name="Strukelj B."/>
            <person name="Lenarcic B."/>
            <person name="Gruden K."/>
            <person name="Pungercar J."/>
            <person name="Rogelj B."/>
            <person name="Turk V."/>
            <person name="Bosch D."/>
            <person name="Jongsma M.A."/>
        </authorList>
    </citation>
    <scope>NUCLEOTIDE SEQUENCE [MRNA]</scope>
    <scope>FUNCTION</scope>
    <scope>RECOMBINANT EXPRESSION</scope>
</reference>
<reference evidence="9" key="2">
    <citation type="journal article" date="2000" name="Biol. Chem.">
        <title>Cloning and expression of functional equistatin.</title>
        <authorList>
            <person name="Galesa K."/>
            <person name="Strukelj B."/>
            <person name="Bavec S."/>
            <person name="Turk V."/>
            <person name="Lenarcic B."/>
        </authorList>
    </citation>
    <scope>NUCLEOTIDE SEQUENCE [MRNA]</scope>
    <scope>FUNCTION</scope>
    <scope>RECOMBINANT EXPRESSION</scope>
</reference>
<reference key="3">
    <citation type="journal article" date="1997" name="J. Biol. Chem.">
        <title>Equistatin, a new inhibitor of cysteine proteinases from Actinia equina, is structurally related to thyroglobulin type-1 domain.</title>
        <authorList>
            <person name="Lenarcic B."/>
            <person name="Ritonja A."/>
            <person name="Strukelj B."/>
            <person name="Turk B."/>
            <person name="Turk V."/>
        </authorList>
    </citation>
    <scope>PROTEIN SEQUENCE</scope>
    <scope>FUNCTION</scope>
    <scope>SUBCELLULAR LOCATION</scope>
</reference>
<reference key="4">
    <citation type="journal article" date="1998" name="J. Biol. Chem.">
        <authorList>
            <person name="Lenarcic B."/>
            <person name="Ritonja A."/>
            <person name="Strukelj B."/>
            <person name="Turk B."/>
            <person name="Turk V."/>
        </authorList>
    </citation>
    <scope>SEQUENCE REVISION</scope>
</reference>
<sequence length="231" mass="25410">MALSQNQAKFSKGFVVMIWVLFIACAITSTEASLTKCQQLQASANSGLIGAYVPQCKETGEFEEKQCWGSTGYCWCVDEDGKEILGTKIRGSPDCSRRKAALTLCQMMQAIIVNVPGWCGPPSCKADGSFDEVQCCASNGECYCVDKKGKELEGTRQQGRPTCERHLSECEEARIKAHSNSLRVEMFVPECFEDGSYNPVQCWPSTGYCWCVDEGGVKVPGSDVRFKRPTC</sequence>
<dbReference type="EMBL" id="AF156179">
    <property type="protein sequence ID" value="AAF24173.1"/>
    <property type="molecule type" value="mRNA"/>
</dbReference>
<dbReference type="EMBL" id="AF184891">
    <property type="protein sequence ID" value="AAF02722.1"/>
    <property type="molecule type" value="mRNA"/>
</dbReference>
<dbReference type="SMR" id="P81439"/>
<dbReference type="MEROPS" id="I31.003"/>
<dbReference type="GO" id="GO:0005615">
    <property type="term" value="C:extracellular space"/>
    <property type="evidence" value="ECO:0007669"/>
    <property type="project" value="TreeGrafter"/>
</dbReference>
<dbReference type="GO" id="GO:0004869">
    <property type="term" value="F:cysteine-type endopeptidase inhibitor activity"/>
    <property type="evidence" value="ECO:0007669"/>
    <property type="project" value="UniProtKB-KW"/>
</dbReference>
<dbReference type="CDD" id="cd00191">
    <property type="entry name" value="TY"/>
    <property type="match status" value="3"/>
</dbReference>
<dbReference type="Gene3D" id="4.10.800.10">
    <property type="entry name" value="Thyroglobulin type-1"/>
    <property type="match status" value="3"/>
</dbReference>
<dbReference type="InterPro" id="IPR051950">
    <property type="entry name" value="Dev_reg/Prot_inhib"/>
</dbReference>
<dbReference type="InterPro" id="IPR000716">
    <property type="entry name" value="Thyroglobulin_1"/>
</dbReference>
<dbReference type="InterPro" id="IPR036857">
    <property type="entry name" value="Thyroglobulin_1_sf"/>
</dbReference>
<dbReference type="PANTHER" id="PTHR12352:SF3">
    <property type="entry name" value="NIDOGEN-2"/>
    <property type="match status" value="1"/>
</dbReference>
<dbReference type="PANTHER" id="PTHR12352">
    <property type="entry name" value="SECRETED MODULAR CALCIUM-BINDING PROTEIN"/>
    <property type="match status" value="1"/>
</dbReference>
<dbReference type="Pfam" id="PF00086">
    <property type="entry name" value="Thyroglobulin_1"/>
    <property type="match status" value="3"/>
</dbReference>
<dbReference type="SMART" id="SM00211">
    <property type="entry name" value="TY"/>
    <property type="match status" value="3"/>
</dbReference>
<dbReference type="SUPFAM" id="SSF57610">
    <property type="entry name" value="Thyroglobulin type-1 domain"/>
    <property type="match status" value="3"/>
</dbReference>
<dbReference type="PROSITE" id="PS00484">
    <property type="entry name" value="THYROGLOBULIN_1_1"/>
    <property type="match status" value="2"/>
</dbReference>
<dbReference type="PROSITE" id="PS51162">
    <property type="entry name" value="THYROGLOBULIN_1_2"/>
    <property type="match status" value="3"/>
</dbReference>
<proteinExistence type="evidence at protein level"/>
<evidence type="ECO:0000255" key="1"/>
<evidence type="ECO:0000255" key="2">
    <source>
        <dbReference type="PROSITE-ProRule" id="PRU00500"/>
    </source>
</evidence>
<evidence type="ECO:0000269" key="3">
    <source>
    </source>
</evidence>
<evidence type="ECO:0000269" key="4">
    <source>
    </source>
</evidence>
<evidence type="ECO:0000269" key="5">
    <source ref="4"/>
</evidence>
<evidence type="ECO:0000303" key="6">
    <source>
    </source>
</evidence>
<evidence type="ECO:0000303" key="7">
    <source>
    </source>
</evidence>
<evidence type="ECO:0000305" key="8"/>
<evidence type="ECO:0000312" key="9">
    <source>
        <dbReference type="EMBL" id="AAF02722.1"/>
    </source>
</evidence>
<evidence type="ECO:0000312" key="10">
    <source>
        <dbReference type="EMBL" id="AAF24173.1"/>
    </source>
</evidence>
<name>EQSTC_ACTEQ</name>
<protein>
    <recommendedName>
        <fullName evidence="6 7">Equistatin</fullName>
        <shortName evidence="6">EI</shortName>
    </recommendedName>
    <alternativeName>
        <fullName evidence="6 7">Cysteine proteinase inhibitor</fullName>
    </alternativeName>
</protein>
<accession>P81439</accession>
<accession>Q9U4R8</accession>
<accession>Q9U6K8</accession>
<organism>
    <name type="scientific">Actinia equina</name>
    <name type="common">Beadlet anemone</name>
    <dbReference type="NCBI Taxonomy" id="6106"/>
    <lineage>
        <taxon>Eukaryota</taxon>
        <taxon>Metazoa</taxon>
        <taxon>Cnidaria</taxon>
        <taxon>Anthozoa</taxon>
        <taxon>Hexacorallia</taxon>
        <taxon>Actiniaria</taxon>
        <taxon>Actiniidae</taxon>
        <taxon>Actinia</taxon>
    </lineage>
</organism>
<keyword id="KW-0903">Direct protein sequencing</keyword>
<keyword id="KW-1015">Disulfide bond</keyword>
<keyword id="KW-0646">Protease inhibitor</keyword>
<keyword id="KW-0677">Repeat</keyword>
<keyword id="KW-0964">Secreted</keyword>
<keyword id="KW-0732">Signal</keyword>
<keyword id="KW-0789">Thiol protease inhibitor</keyword>
<comment type="function">
    <text evidence="3 4">Potent inhibitor of papain-like cysteine proteinases (Ki=0.18-0.57 nM on papain), as well as of the aspartic proteinase cathepsin D (Ki=0.3-05 nM).</text>
</comment>
<comment type="subcellular location">
    <subcellularLocation>
        <location evidence="4">Secreted</location>
    </subcellularLocation>
</comment>
<comment type="similarity">
    <text evidence="8">Belongs to the protease inhibitor I31 family.</text>
</comment>